<organism>
    <name type="scientific">Mycosarcoma maydis</name>
    <name type="common">Corn smut fungus</name>
    <name type="synonym">Ustilago maydis</name>
    <dbReference type="NCBI Taxonomy" id="5270"/>
    <lineage>
        <taxon>Eukaryota</taxon>
        <taxon>Fungi</taxon>
        <taxon>Dikarya</taxon>
        <taxon>Basidiomycota</taxon>
        <taxon>Ustilaginomycotina</taxon>
        <taxon>Ustilaginomycetes</taxon>
        <taxon>Ustilaginales</taxon>
        <taxon>Ustilaginaceae</taxon>
        <taxon>Mycosarcoma</taxon>
    </lineage>
</organism>
<dbReference type="EC" id="3.6.4.13" evidence="1"/>
<dbReference type="EMBL" id="CM003143">
    <property type="protein sequence ID" value="KIS70142.1"/>
    <property type="molecule type" value="Genomic_DNA"/>
</dbReference>
<dbReference type="RefSeq" id="XP_011388253.1">
    <property type="nucleotide sequence ID" value="XM_011389951.1"/>
</dbReference>
<dbReference type="SMR" id="Q4P3U9"/>
<dbReference type="FunCoup" id="Q4P3U9">
    <property type="interactions" value="723"/>
</dbReference>
<dbReference type="STRING" id="237631.Q4P3U9"/>
<dbReference type="EnsemblFungi" id="KIS70142">
    <property type="protein sequence ID" value="KIS70142"/>
    <property type="gene ID" value="UMAG_05214"/>
</dbReference>
<dbReference type="GeneID" id="23565163"/>
<dbReference type="KEGG" id="uma:UMAG_05214"/>
<dbReference type="VEuPathDB" id="FungiDB:UMAG_05214"/>
<dbReference type="eggNOG" id="KOG0330">
    <property type="taxonomic scope" value="Eukaryota"/>
</dbReference>
<dbReference type="HOGENOM" id="CLU_003041_1_1_1"/>
<dbReference type="InParanoid" id="Q4P3U9"/>
<dbReference type="OrthoDB" id="10261904at2759"/>
<dbReference type="Proteomes" id="UP000000561">
    <property type="component" value="Chromosome 4"/>
</dbReference>
<dbReference type="GO" id="GO:0005730">
    <property type="term" value="C:nucleolus"/>
    <property type="evidence" value="ECO:0007669"/>
    <property type="project" value="EnsemblFungi"/>
</dbReference>
<dbReference type="GO" id="GO:0005634">
    <property type="term" value="C:nucleus"/>
    <property type="evidence" value="ECO:0000318"/>
    <property type="project" value="GO_Central"/>
</dbReference>
<dbReference type="GO" id="GO:0032040">
    <property type="term" value="C:small-subunit processome"/>
    <property type="evidence" value="ECO:0007669"/>
    <property type="project" value="EnsemblFungi"/>
</dbReference>
<dbReference type="GO" id="GO:0005524">
    <property type="term" value="F:ATP binding"/>
    <property type="evidence" value="ECO:0007669"/>
    <property type="project" value="UniProtKB-KW"/>
</dbReference>
<dbReference type="GO" id="GO:0016887">
    <property type="term" value="F:ATP hydrolysis activity"/>
    <property type="evidence" value="ECO:0007669"/>
    <property type="project" value="RHEA"/>
</dbReference>
<dbReference type="GO" id="GO:0003723">
    <property type="term" value="F:RNA binding"/>
    <property type="evidence" value="ECO:0007669"/>
    <property type="project" value="UniProtKB-KW"/>
</dbReference>
<dbReference type="GO" id="GO:0003724">
    <property type="term" value="F:RNA helicase activity"/>
    <property type="evidence" value="ECO:0007669"/>
    <property type="project" value="UniProtKB-EC"/>
</dbReference>
<dbReference type="GO" id="GO:0000462">
    <property type="term" value="P:maturation of SSU-rRNA from tricistronic rRNA transcript (SSU-rRNA, 5.8S rRNA, LSU-rRNA)"/>
    <property type="evidence" value="ECO:0007669"/>
    <property type="project" value="EnsemblFungi"/>
</dbReference>
<dbReference type="GO" id="GO:0006364">
    <property type="term" value="P:rRNA processing"/>
    <property type="evidence" value="ECO:0000318"/>
    <property type="project" value="GO_Central"/>
</dbReference>
<dbReference type="CDD" id="cd17954">
    <property type="entry name" value="DEADc_DDX47"/>
    <property type="match status" value="1"/>
</dbReference>
<dbReference type="CDD" id="cd18787">
    <property type="entry name" value="SF2_C_DEAD"/>
    <property type="match status" value="1"/>
</dbReference>
<dbReference type="Gene3D" id="3.40.50.300">
    <property type="entry name" value="P-loop containing nucleotide triphosphate hydrolases"/>
    <property type="match status" value="2"/>
</dbReference>
<dbReference type="InterPro" id="IPR044765">
    <property type="entry name" value="DDX47/Rrp3_DEADc"/>
</dbReference>
<dbReference type="InterPro" id="IPR011545">
    <property type="entry name" value="DEAD/DEAH_box_helicase_dom"/>
</dbReference>
<dbReference type="InterPro" id="IPR050079">
    <property type="entry name" value="DEAD_box_RNA_helicase"/>
</dbReference>
<dbReference type="InterPro" id="IPR014001">
    <property type="entry name" value="Helicase_ATP-bd"/>
</dbReference>
<dbReference type="InterPro" id="IPR001650">
    <property type="entry name" value="Helicase_C-like"/>
</dbReference>
<dbReference type="InterPro" id="IPR027417">
    <property type="entry name" value="P-loop_NTPase"/>
</dbReference>
<dbReference type="InterPro" id="IPR000629">
    <property type="entry name" value="RNA-helicase_DEAD-box_CS"/>
</dbReference>
<dbReference type="InterPro" id="IPR014014">
    <property type="entry name" value="RNA_helicase_DEAD_Q_motif"/>
</dbReference>
<dbReference type="PANTHER" id="PTHR47959">
    <property type="entry name" value="ATP-DEPENDENT RNA HELICASE RHLE-RELATED"/>
    <property type="match status" value="1"/>
</dbReference>
<dbReference type="PANTHER" id="PTHR47959:SF20">
    <property type="entry name" value="RNA HELICASE"/>
    <property type="match status" value="1"/>
</dbReference>
<dbReference type="Pfam" id="PF00270">
    <property type="entry name" value="DEAD"/>
    <property type="match status" value="1"/>
</dbReference>
<dbReference type="Pfam" id="PF00271">
    <property type="entry name" value="Helicase_C"/>
    <property type="match status" value="1"/>
</dbReference>
<dbReference type="SMART" id="SM00487">
    <property type="entry name" value="DEXDc"/>
    <property type="match status" value="1"/>
</dbReference>
<dbReference type="SMART" id="SM00490">
    <property type="entry name" value="HELICc"/>
    <property type="match status" value="1"/>
</dbReference>
<dbReference type="SUPFAM" id="SSF52540">
    <property type="entry name" value="P-loop containing nucleoside triphosphate hydrolases"/>
    <property type="match status" value="1"/>
</dbReference>
<dbReference type="PROSITE" id="PS00039">
    <property type="entry name" value="DEAD_ATP_HELICASE"/>
    <property type="match status" value="1"/>
</dbReference>
<dbReference type="PROSITE" id="PS51192">
    <property type="entry name" value="HELICASE_ATP_BIND_1"/>
    <property type="match status" value="1"/>
</dbReference>
<dbReference type="PROSITE" id="PS51194">
    <property type="entry name" value="HELICASE_CTER"/>
    <property type="match status" value="1"/>
</dbReference>
<dbReference type="PROSITE" id="PS51195">
    <property type="entry name" value="Q_MOTIF"/>
    <property type="match status" value="1"/>
</dbReference>
<feature type="chain" id="PRO_0000232279" description="ATP-dependent rRNA helicase RRP3">
    <location>
        <begin position="1"/>
        <end position="561"/>
    </location>
</feature>
<feature type="domain" description="Helicase ATP-binding" evidence="2">
    <location>
        <begin position="145"/>
        <end position="316"/>
    </location>
</feature>
<feature type="domain" description="Helicase C-terminal" evidence="3">
    <location>
        <begin position="339"/>
        <end position="487"/>
    </location>
</feature>
<feature type="region of interest" description="Disordered" evidence="5">
    <location>
        <begin position="1"/>
        <end position="109"/>
    </location>
</feature>
<feature type="region of interest" description="Disordered" evidence="5">
    <location>
        <begin position="506"/>
        <end position="561"/>
    </location>
</feature>
<feature type="short sequence motif" description="Q motif" evidence="4">
    <location>
        <begin position="114"/>
        <end position="142"/>
    </location>
</feature>
<feature type="short sequence motif" description="DEAD box" evidence="2">
    <location>
        <begin position="264"/>
        <end position="267"/>
    </location>
</feature>
<feature type="compositionally biased region" description="Low complexity" evidence="5">
    <location>
        <begin position="1"/>
        <end position="23"/>
    </location>
</feature>
<feature type="compositionally biased region" description="Low complexity" evidence="5">
    <location>
        <begin position="30"/>
        <end position="45"/>
    </location>
</feature>
<feature type="compositionally biased region" description="Basic and acidic residues" evidence="5">
    <location>
        <begin position="100"/>
        <end position="109"/>
    </location>
</feature>
<feature type="binding site" evidence="2">
    <location>
        <begin position="158"/>
        <end position="165"/>
    </location>
    <ligand>
        <name>ATP</name>
        <dbReference type="ChEBI" id="CHEBI:30616"/>
    </ligand>
</feature>
<protein>
    <recommendedName>
        <fullName evidence="6">ATP-dependent rRNA helicase RRP3</fullName>
        <ecNumber evidence="1">3.6.4.13</ecNumber>
    </recommendedName>
</protein>
<name>RRP3_MYCMD</name>
<proteinExistence type="inferred from homology"/>
<reference key="1">
    <citation type="journal article" date="2006" name="Nature">
        <title>Insights from the genome of the biotrophic fungal plant pathogen Ustilago maydis.</title>
        <authorList>
            <person name="Kaemper J."/>
            <person name="Kahmann R."/>
            <person name="Boelker M."/>
            <person name="Ma L.-J."/>
            <person name="Brefort T."/>
            <person name="Saville B.J."/>
            <person name="Banuett F."/>
            <person name="Kronstad J.W."/>
            <person name="Gold S.E."/>
            <person name="Mueller O."/>
            <person name="Perlin M.H."/>
            <person name="Woesten H.A.B."/>
            <person name="de Vries R."/>
            <person name="Ruiz-Herrera J."/>
            <person name="Reynaga-Pena C.G."/>
            <person name="Snetselaar K."/>
            <person name="McCann M."/>
            <person name="Perez-Martin J."/>
            <person name="Feldbruegge M."/>
            <person name="Basse C.W."/>
            <person name="Steinberg G."/>
            <person name="Ibeas J.I."/>
            <person name="Holloman W."/>
            <person name="Guzman P."/>
            <person name="Farman M.L."/>
            <person name="Stajich J.E."/>
            <person name="Sentandreu R."/>
            <person name="Gonzalez-Prieto J.M."/>
            <person name="Kennell J.C."/>
            <person name="Molina L."/>
            <person name="Schirawski J."/>
            <person name="Mendoza-Mendoza A."/>
            <person name="Greilinger D."/>
            <person name="Muench K."/>
            <person name="Roessel N."/>
            <person name="Scherer M."/>
            <person name="Vranes M."/>
            <person name="Ladendorf O."/>
            <person name="Vincon V."/>
            <person name="Fuchs U."/>
            <person name="Sandrock B."/>
            <person name="Meng S."/>
            <person name="Ho E.C.H."/>
            <person name="Cahill M.J."/>
            <person name="Boyce K.J."/>
            <person name="Klose J."/>
            <person name="Klosterman S.J."/>
            <person name="Deelstra H.J."/>
            <person name="Ortiz-Castellanos L."/>
            <person name="Li W."/>
            <person name="Sanchez-Alonso P."/>
            <person name="Schreier P.H."/>
            <person name="Haeuser-Hahn I."/>
            <person name="Vaupel M."/>
            <person name="Koopmann E."/>
            <person name="Friedrich G."/>
            <person name="Voss H."/>
            <person name="Schlueter T."/>
            <person name="Margolis J."/>
            <person name="Platt D."/>
            <person name="Swimmer C."/>
            <person name="Gnirke A."/>
            <person name="Chen F."/>
            <person name="Vysotskaia V."/>
            <person name="Mannhaupt G."/>
            <person name="Gueldener U."/>
            <person name="Muensterkoetter M."/>
            <person name="Haase D."/>
            <person name="Oesterheld M."/>
            <person name="Mewes H.-W."/>
            <person name="Mauceli E.W."/>
            <person name="DeCaprio D."/>
            <person name="Wade C.M."/>
            <person name="Butler J."/>
            <person name="Young S.K."/>
            <person name="Jaffe D.B."/>
            <person name="Calvo S.E."/>
            <person name="Nusbaum C."/>
            <person name="Galagan J.E."/>
            <person name="Birren B.W."/>
        </authorList>
    </citation>
    <scope>NUCLEOTIDE SEQUENCE [LARGE SCALE GENOMIC DNA]</scope>
    <source>
        <strain>DSM 14603 / FGSC 9021 / UM521</strain>
    </source>
</reference>
<reference key="2">
    <citation type="submission" date="2014-09" db="EMBL/GenBank/DDBJ databases">
        <authorList>
            <person name="Gueldener U."/>
            <person name="Muensterkoetter M."/>
            <person name="Walter M.C."/>
            <person name="Mannhaupt G."/>
            <person name="Kahmann R."/>
        </authorList>
    </citation>
    <scope>GENOME REANNOTATION</scope>
    <source>
        <strain>DSM 14603 / FGSC 9021 / UM521</strain>
    </source>
</reference>
<sequence length="561" mass="60840">MPKASASSAKMTASTSNVSSSNSKLKKSKASSPSASPEVSTPSTSNSNDDQDGHVSEDMSDAEEGESQEHSASGSGISDHDDDDDPSADKDSPAADEEQDEKKVATIADDGKKVEFSDLGVIPQIVEACTNMGFKHPTPIQVKAIPEALQARDVIGLAQTGSGKTAAFTIPILQALWDNPKPFFACVLAPTRELAYQISQQVEALGSTIGVRSATIVGGMDMMSQSIALSKRPHVIVATPGRLQDHLENTKGFSLRGLQYLVMDEADRLLDMDFGPIIDKLLQSIPRERRTMLFSATMTTKVAKLQRASLKNPVRVEVDTKYTTVSTLKQHYMFMPFAHKDTYLVHLANEQAGHSIIVFTRTVHDSQRLSILLRLLGFPAIPLHGQLSQQARLGALNKFKTGGRSILVATDVASRGLDIPAVDLVVNYDIPTNSKDYIHRVGRTARAGRSGRSVTLVTQYDVELLQRIEAVIGLKMTEFPGGNDKEAVMLLSERVAEAHRAAVRELKDKGVGSAGGSGKRKRKMDGKYGDDMDRDDDQVQAGLPVSGNGRHQNQNRKKGRR</sequence>
<gene>
    <name evidence="1" type="primary">RRP3</name>
    <name type="ORF">UMAG_05214</name>
</gene>
<keyword id="KW-0067">ATP-binding</keyword>
<keyword id="KW-0175">Coiled coil</keyword>
<keyword id="KW-0347">Helicase</keyword>
<keyword id="KW-0378">Hydrolase</keyword>
<keyword id="KW-0547">Nucleotide-binding</keyword>
<keyword id="KW-0539">Nucleus</keyword>
<keyword id="KW-1185">Reference proteome</keyword>
<keyword id="KW-0690">Ribosome biogenesis</keyword>
<keyword id="KW-0694">RNA-binding</keyword>
<keyword id="KW-0698">rRNA processing</keyword>
<evidence type="ECO:0000250" key="1">
    <source>
        <dbReference type="UniProtKB" id="P38712"/>
    </source>
</evidence>
<evidence type="ECO:0000255" key="2">
    <source>
        <dbReference type="PROSITE-ProRule" id="PRU00541"/>
    </source>
</evidence>
<evidence type="ECO:0000255" key="3">
    <source>
        <dbReference type="PROSITE-ProRule" id="PRU00542"/>
    </source>
</evidence>
<evidence type="ECO:0000255" key="4">
    <source>
        <dbReference type="PROSITE-ProRule" id="PRU00552"/>
    </source>
</evidence>
<evidence type="ECO:0000256" key="5">
    <source>
        <dbReference type="SAM" id="MobiDB-lite"/>
    </source>
</evidence>
<evidence type="ECO:0000305" key="6"/>
<comment type="function">
    <text evidence="1">ATP-dependent rRNA helicase required for pre-ribosomal RNA processing. Involved in the maturation of the 35S-pre-rRNA and to its cleavage to mature 18S rRNA.</text>
</comment>
<comment type="catalytic activity">
    <reaction evidence="1">
        <text>ATP + H2O = ADP + phosphate + H(+)</text>
        <dbReference type="Rhea" id="RHEA:13065"/>
        <dbReference type="ChEBI" id="CHEBI:15377"/>
        <dbReference type="ChEBI" id="CHEBI:15378"/>
        <dbReference type="ChEBI" id="CHEBI:30616"/>
        <dbReference type="ChEBI" id="CHEBI:43474"/>
        <dbReference type="ChEBI" id="CHEBI:456216"/>
        <dbReference type="EC" id="3.6.4.13"/>
    </reaction>
</comment>
<comment type="subunit">
    <text evidence="1">Interacts with the SSU processome.</text>
</comment>
<comment type="subcellular location">
    <subcellularLocation>
        <location evidence="6">Nucleus</location>
    </subcellularLocation>
</comment>
<comment type="domain">
    <text evidence="6">The Q motif is unique to and characteristic of the DEAD box family of RNA helicases and controls ATP binding and hydrolysis.</text>
</comment>
<comment type="similarity">
    <text evidence="6">Belongs to the DEAD box helicase family. DDX47/RRP3 subfamily.</text>
</comment>
<accession>Q4P3U9</accession>
<accession>A0A0D1C9Z3</accession>